<protein>
    <recommendedName>
        <fullName evidence="1">Small ribosomal subunit protein uS5</fullName>
    </recommendedName>
    <alternativeName>
        <fullName evidence="2">30S ribosomal protein S5</fullName>
    </alternativeName>
</protein>
<accession>Q252W9</accession>
<comment type="function">
    <text evidence="1">With S4 and S12 plays an important role in translational accuracy.</text>
</comment>
<comment type="function">
    <text evidence="1">Located at the back of the 30S subunit body where it stabilizes the conformation of the head with respect to the body.</text>
</comment>
<comment type="subunit">
    <text evidence="1">Part of the 30S ribosomal subunit. Contacts proteins S4 and S8.</text>
</comment>
<comment type="domain">
    <text>The N-terminal domain interacts with the head of the 30S subunit; the C-terminal domain interacts with the body and contacts protein S4. The interaction surface between S4 and S5 is involved in control of translational fidelity.</text>
</comment>
<comment type="similarity">
    <text evidence="1">Belongs to the universal ribosomal protein uS5 family.</text>
</comment>
<dbReference type="EMBL" id="AP006861">
    <property type="protein sequence ID" value="BAE81669.1"/>
    <property type="molecule type" value="Genomic_DNA"/>
</dbReference>
<dbReference type="RefSeq" id="WP_011458443.1">
    <property type="nucleotide sequence ID" value="NC_007899.1"/>
</dbReference>
<dbReference type="SMR" id="Q252W9"/>
<dbReference type="STRING" id="264202.CF0897"/>
<dbReference type="KEGG" id="cfe:CF0897"/>
<dbReference type="eggNOG" id="COG0098">
    <property type="taxonomic scope" value="Bacteria"/>
</dbReference>
<dbReference type="HOGENOM" id="CLU_065898_2_2_0"/>
<dbReference type="OrthoDB" id="9809045at2"/>
<dbReference type="Proteomes" id="UP000001260">
    <property type="component" value="Chromosome"/>
</dbReference>
<dbReference type="GO" id="GO:0015935">
    <property type="term" value="C:small ribosomal subunit"/>
    <property type="evidence" value="ECO:0007669"/>
    <property type="project" value="InterPro"/>
</dbReference>
<dbReference type="GO" id="GO:0019843">
    <property type="term" value="F:rRNA binding"/>
    <property type="evidence" value="ECO:0007669"/>
    <property type="project" value="UniProtKB-UniRule"/>
</dbReference>
<dbReference type="GO" id="GO:0003735">
    <property type="term" value="F:structural constituent of ribosome"/>
    <property type="evidence" value="ECO:0007669"/>
    <property type="project" value="InterPro"/>
</dbReference>
<dbReference type="GO" id="GO:0006412">
    <property type="term" value="P:translation"/>
    <property type="evidence" value="ECO:0007669"/>
    <property type="project" value="UniProtKB-UniRule"/>
</dbReference>
<dbReference type="FunFam" id="3.30.160.20:FF:000066">
    <property type="entry name" value="30S ribosomal protein S5"/>
    <property type="match status" value="1"/>
</dbReference>
<dbReference type="FunFam" id="3.30.230.10:FF:000002">
    <property type="entry name" value="30S ribosomal protein S5"/>
    <property type="match status" value="1"/>
</dbReference>
<dbReference type="Gene3D" id="3.30.160.20">
    <property type="match status" value="1"/>
</dbReference>
<dbReference type="Gene3D" id="3.30.230.10">
    <property type="match status" value="1"/>
</dbReference>
<dbReference type="HAMAP" id="MF_01307_B">
    <property type="entry name" value="Ribosomal_uS5_B"/>
    <property type="match status" value="1"/>
</dbReference>
<dbReference type="InterPro" id="IPR020568">
    <property type="entry name" value="Ribosomal_Su5_D2-typ_SF"/>
</dbReference>
<dbReference type="InterPro" id="IPR000851">
    <property type="entry name" value="Ribosomal_uS5"/>
</dbReference>
<dbReference type="InterPro" id="IPR005712">
    <property type="entry name" value="Ribosomal_uS5_bac-type"/>
</dbReference>
<dbReference type="InterPro" id="IPR005324">
    <property type="entry name" value="Ribosomal_uS5_C"/>
</dbReference>
<dbReference type="InterPro" id="IPR013810">
    <property type="entry name" value="Ribosomal_uS5_N"/>
</dbReference>
<dbReference type="InterPro" id="IPR018192">
    <property type="entry name" value="Ribosomal_uS5_N_CS"/>
</dbReference>
<dbReference type="InterPro" id="IPR014721">
    <property type="entry name" value="Ribsml_uS5_D2-typ_fold_subgr"/>
</dbReference>
<dbReference type="NCBIfam" id="TIGR01021">
    <property type="entry name" value="rpsE_bact"/>
    <property type="match status" value="1"/>
</dbReference>
<dbReference type="PANTHER" id="PTHR48277">
    <property type="entry name" value="MITOCHONDRIAL RIBOSOMAL PROTEIN S5"/>
    <property type="match status" value="1"/>
</dbReference>
<dbReference type="PANTHER" id="PTHR48277:SF1">
    <property type="entry name" value="MITOCHONDRIAL RIBOSOMAL PROTEIN S5"/>
    <property type="match status" value="1"/>
</dbReference>
<dbReference type="Pfam" id="PF00333">
    <property type="entry name" value="Ribosomal_S5"/>
    <property type="match status" value="1"/>
</dbReference>
<dbReference type="Pfam" id="PF03719">
    <property type="entry name" value="Ribosomal_S5_C"/>
    <property type="match status" value="1"/>
</dbReference>
<dbReference type="SUPFAM" id="SSF54768">
    <property type="entry name" value="dsRNA-binding domain-like"/>
    <property type="match status" value="1"/>
</dbReference>
<dbReference type="SUPFAM" id="SSF54211">
    <property type="entry name" value="Ribosomal protein S5 domain 2-like"/>
    <property type="match status" value="1"/>
</dbReference>
<dbReference type="PROSITE" id="PS00585">
    <property type="entry name" value="RIBOSOMAL_S5"/>
    <property type="match status" value="1"/>
</dbReference>
<dbReference type="PROSITE" id="PS50881">
    <property type="entry name" value="S5_DSRBD"/>
    <property type="match status" value="1"/>
</dbReference>
<organism>
    <name type="scientific">Chlamydia felis (strain Fe/C-56)</name>
    <name type="common">Chlamydophila felis</name>
    <dbReference type="NCBI Taxonomy" id="264202"/>
    <lineage>
        <taxon>Bacteria</taxon>
        <taxon>Pseudomonadati</taxon>
        <taxon>Chlamydiota</taxon>
        <taxon>Chlamydiia</taxon>
        <taxon>Chlamydiales</taxon>
        <taxon>Chlamydiaceae</taxon>
        <taxon>Chlamydia/Chlamydophila group</taxon>
        <taxon>Chlamydia</taxon>
    </lineage>
</organism>
<proteinExistence type="inferred from homology"/>
<reference key="1">
    <citation type="journal article" date="2006" name="DNA Res.">
        <title>Genome sequence of the cat pathogen, Chlamydophila felis.</title>
        <authorList>
            <person name="Azuma Y."/>
            <person name="Hirakawa H."/>
            <person name="Yamashita A."/>
            <person name="Cai Y."/>
            <person name="Rahman M.A."/>
            <person name="Suzuki H."/>
            <person name="Mitaku S."/>
            <person name="Toh H."/>
            <person name="Goto S."/>
            <person name="Murakami T."/>
            <person name="Sugi K."/>
            <person name="Hayashi H."/>
            <person name="Fukushi H."/>
            <person name="Hattori M."/>
            <person name="Kuhara S."/>
            <person name="Shirai M."/>
        </authorList>
    </citation>
    <scope>NUCLEOTIDE SEQUENCE [LARGE SCALE GENOMIC DNA]</scope>
    <source>
        <strain>Fe/C-56</strain>
    </source>
</reference>
<evidence type="ECO:0000255" key="1">
    <source>
        <dbReference type="HAMAP-Rule" id="MF_01307"/>
    </source>
</evidence>
<evidence type="ECO:0000305" key="2"/>
<name>RS5_CHLFF</name>
<gene>
    <name evidence="1" type="primary">rpsE</name>
    <name type="ordered locus">CF0897</name>
</gene>
<feature type="chain" id="PRO_0000323103" description="Small ribosomal subunit protein uS5">
    <location>
        <begin position="1"/>
        <end position="165"/>
    </location>
</feature>
<feature type="domain" description="S5 DRBM" evidence="1">
    <location>
        <begin position="13"/>
        <end position="76"/>
    </location>
</feature>
<sequence>MTLSKNSHKEDQLEEKVLVVNRCSKVVKGGRKFSFSALILVGDGKGRLGCGFAKANELTDAIRKGGEAARKNLITIETLDGDSIPHEVLVDQDGAQLLLKPAKPGTGIVAGSRIRLILEMAGIKNIVAKSLGSNNPMNQVKAAFKALLSLSSRKDVLQRRRVTHD</sequence>
<keyword id="KW-0687">Ribonucleoprotein</keyword>
<keyword id="KW-0689">Ribosomal protein</keyword>
<keyword id="KW-0694">RNA-binding</keyword>
<keyword id="KW-0699">rRNA-binding</keyword>